<keyword id="KW-1003">Cell membrane</keyword>
<keyword id="KW-0903">Direct protein sequencing</keyword>
<keyword id="KW-0472">Membrane</keyword>
<keyword id="KW-0597">Phosphoprotein</keyword>
<keyword id="KW-1185">Reference proteome</keyword>
<keyword id="KW-0770">Synapse</keyword>
<name>DLGP2_RAT</name>
<gene>
    <name evidence="7" type="primary">Dlgap2</name>
    <name type="synonym">Dap2</name>
</gene>
<protein>
    <recommendedName>
        <fullName evidence="2">Disks large-associated protein 2</fullName>
        <shortName>DAP-2</shortName>
    </recommendedName>
    <alternativeName>
        <fullName>PSD-95/SAP90-binding protein 2</fullName>
    </alternativeName>
    <alternativeName>
        <fullName>SAP90/PSD-95-associated protein 2</fullName>
        <shortName>SAPAP2</shortName>
    </alternativeName>
</protein>
<reference key="1">
    <citation type="journal article" date="1997" name="J. Biol. Chem.">
        <title>SAPAPs. A family of PSD-95/SAP90-associated proteins localized at postsynaptic density.</title>
        <authorList>
            <person name="Takeuchi M."/>
            <person name="Hata Y."/>
            <person name="Hirao K."/>
            <person name="Toyoda A."/>
            <person name="Irie M."/>
            <person name="Takai Y."/>
        </authorList>
    </citation>
    <scope>NUCLEOTIDE SEQUENCE [MRNA]</scope>
    <scope>TISSUE SPECIFICITY</scope>
    <scope>SUBCELLULAR LOCATION</scope>
    <scope>INTERACTION WITH DLG4</scope>
    <source>
        <tissue>Brain</tissue>
    </source>
</reference>
<reference key="2">
    <citation type="submission" date="2007-09" db="UniProtKB">
        <authorList>
            <person name="Lubec G."/>
            <person name="Kang S.U."/>
            <person name="Lubec S."/>
        </authorList>
    </citation>
    <scope>PROTEIN SEQUENCE OF 234-241 AND 710-715</scope>
    <scope>IDENTIFICATION BY MASS SPECTROMETRY</scope>
    <source>
        <strain>Sprague-Dawley</strain>
        <tissue>Brain</tissue>
    </source>
</reference>
<reference key="3">
    <citation type="journal article" date="2004" name="Brain Res. Mol. Brain Res.">
        <title>Distinct spatiotemporal expression of SAPAP transcripts in the developing rat brain: a novel dendritically localized mRNA.</title>
        <authorList>
            <person name="Kindler S."/>
            <person name="Rehbein M."/>
            <person name="Classen B."/>
            <person name="Richter D."/>
            <person name="Boeckers T.M."/>
        </authorList>
    </citation>
    <scope>TISSUE SPECIFICITY</scope>
</reference>
<reference key="4">
    <citation type="journal article" date="2012" name="Nat. Commun.">
        <title>Quantitative maps of protein phosphorylation sites across 14 different rat organs and tissues.</title>
        <authorList>
            <person name="Lundby A."/>
            <person name="Secher A."/>
            <person name="Lage K."/>
            <person name="Nordsborg N.B."/>
            <person name="Dmytriyev A."/>
            <person name="Lundby C."/>
            <person name="Olsen J.V."/>
        </authorList>
    </citation>
    <scope>PHOSPHORYLATION [LARGE SCALE ANALYSIS] AT SER-302; SER-308; SER-390; SER-670; SER-673; THR-743; SER-745 AND SER-983</scope>
    <scope>IDENTIFICATION BY MASS SPECTROMETRY [LARGE SCALE ANALYSIS]</scope>
</reference>
<accession>P97837</accession>
<proteinExistence type="evidence at protein level"/>
<feature type="chain" id="PRO_0000174293" description="Disks large-associated protein 2">
    <location>
        <begin position="1"/>
        <end position="1059"/>
    </location>
</feature>
<feature type="region of interest" description="Disordered" evidence="3">
    <location>
        <begin position="31"/>
        <end position="56"/>
    </location>
</feature>
<feature type="region of interest" description="Disordered" evidence="3">
    <location>
        <begin position="244"/>
        <end position="311"/>
    </location>
</feature>
<feature type="region of interest" description="Disordered" evidence="3">
    <location>
        <begin position="446"/>
        <end position="466"/>
    </location>
</feature>
<feature type="region of interest" description="Disordered" evidence="3">
    <location>
        <begin position="632"/>
        <end position="669"/>
    </location>
</feature>
<feature type="region of interest" description="Disordered" evidence="3">
    <location>
        <begin position="723"/>
        <end position="756"/>
    </location>
</feature>
<feature type="region of interest" description="Disordered" evidence="3">
    <location>
        <begin position="985"/>
        <end position="1024"/>
    </location>
</feature>
<feature type="compositionally biased region" description="Polar residues" evidence="3">
    <location>
        <begin position="244"/>
        <end position="261"/>
    </location>
</feature>
<feature type="compositionally biased region" description="Basic and acidic residues" evidence="3">
    <location>
        <begin position="262"/>
        <end position="271"/>
    </location>
</feature>
<feature type="compositionally biased region" description="Basic residues" evidence="3">
    <location>
        <begin position="272"/>
        <end position="285"/>
    </location>
</feature>
<feature type="compositionally biased region" description="Polar residues" evidence="3">
    <location>
        <begin position="632"/>
        <end position="645"/>
    </location>
</feature>
<feature type="compositionally biased region" description="Basic and acidic residues" evidence="3">
    <location>
        <begin position="747"/>
        <end position="756"/>
    </location>
</feature>
<feature type="compositionally biased region" description="Basic and acidic residues" evidence="3">
    <location>
        <begin position="1007"/>
        <end position="1024"/>
    </location>
</feature>
<feature type="modified residue" description="Phosphoserine" evidence="8">
    <location>
        <position position="302"/>
    </location>
</feature>
<feature type="modified residue" description="Phosphoserine" evidence="8">
    <location>
        <position position="308"/>
    </location>
</feature>
<feature type="modified residue" description="Phosphoserine" evidence="8">
    <location>
        <position position="390"/>
    </location>
</feature>
<feature type="modified residue" description="Phosphoserine" evidence="1">
    <location>
        <position position="456"/>
    </location>
</feature>
<feature type="modified residue" description="Phosphoserine" evidence="1">
    <location>
        <position position="667"/>
    </location>
</feature>
<feature type="modified residue" description="Phosphoserine" evidence="8">
    <location>
        <position position="670"/>
    </location>
</feature>
<feature type="modified residue" description="Phosphoserine" evidence="8">
    <location>
        <position position="673"/>
    </location>
</feature>
<feature type="modified residue" description="Phosphoserine" evidence="1">
    <location>
        <position position="720"/>
    </location>
</feature>
<feature type="modified residue" description="Phosphothreonine" evidence="8">
    <location>
        <position position="743"/>
    </location>
</feature>
<feature type="modified residue" description="Phosphoserine" evidence="8">
    <location>
        <position position="745"/>
    </location>
</feature>
<feature type="modified residue" description="Phosphoserine" evidence="1">
    <location>
        <position position="776"/>
    </location>
</feature>
<feature type="modified residue" description="Phosphoserine" evidence="1">
    <location>
        <position position="811"/>
    </location>
</feature>
<feature type="modified residue" description="Phosphoserine" evidence="8">
    <location>
        <position position="983"/>
    </location>
</feature>
<feature type="modified residue" description="Phosphoserine" evidence="1">
    <location>
        <position position="1012"/>
    </location>
</feature>
<organism>
    <name type="scientific">Rattus norvegicus</name>
    <name type="common">Rat</name>
    <dbReference type="NCBI Taxonomy" id="10116"/>
    <lineage>
        <taxon>Eukaryota</taxon>
        <taxon>Metazoa</taxon>
        <taxon>Chordata</taxon>
        <taxon>Craniata</taxon>
        <taxon>Vertebrata</taxon>
        <taxon>Euteleostomi</taxon>
        <taxon>Mammalia</taxon>
        <taxon>Eutheria</taxon>
        <taxon>Euarchontoglires</taxon>
        <taxon>Glires</taxon>
        <taxon>Rodentia</taxon>
        <taxon>Myomorpha</taxon>
        <taxon>Muroidea</taxon>
        <taxon>Muridae</taxon>
        <taxon>Murinae</taxon>
        <taxon>Rattus</taxon>
    </lineage>
</organism>
<sequence length="1059" mass="118978">MGTAQVLPGILQKHCCILPDRNTESQCTLCGEPEEEEGGDLAQPGLSFPGPAEEDIDQQYSWSPTQHFSEERYSPAPRNMKGLTGSRNQPQLCVGHTCGLSPTDECEHPHDHVRHGPDVRQPYLLSPAESCPMDHHRCSPRSSVHSECMMMPVMLGDHVSSSTFPRMHYSSHYDTRDDCATSHASTKVNRIPANLLDQFEKQLPLHRDGFHTLQYHRASAATEQRNESPGRIRHLVHSVQKLFTKSHSLEGSSKSNINGTKSEGRMDDHHQSHLSKHSKRSKSKERKPESKHKSGMSSWWSSDDNLDSDSTYRTPSVAHRHHMDHIPHCYPEALQSPFGDLSLKTSKSNSDVKCSACEGLALTPDTRYMKRSSWSTLTVSQAKEAYRKSSLNLDKPLVHPEIKPSLQPCHYLQVPQDDWGAYPTGGKEEEIPCRRMRSGSYIKAMGDEESGESDSSPKTSPTVALRPEPLLKSIIQRPLGDHQTQSYLQAATEVPVGHSLDPSVNYNSPKFRSRNQSYMRAVSTLSQASCVSQMSEAEVNGQFESVCESVFSEVESQAMDALDLPGCFRTRSHSYLRAIQAGYSQDDECIPVMTPSNMTSTIRSTAAVSYTNYKKTPPPVPPRTTSKPLISVTAQSSTESTQDAYQDSRAQRMSPWPQDSRGGLYNSMDSLDSNKAMNLALESAAAQRHAADTQSSSTRSIDKAVLVSKAEELLKSRCSSIGVQDSEFPDHQPYPRSDVETATDSDTESRGLREYHSVGVQVEDEKRHGRFKRSNSVTAAVQADLELEGFPGHVSMEDKGLQFGSSFQRHSEPSTPTQYGALRTVRTQGLFSYREDYRTQVDTSTLPPPDPWLEPSLDTVETGRMSPCRRDGSWFLKLLHTETKKMEGWCKEMEREAEENDLSEEILGKIRSAVGSAQLLMSQKFQQFYWLCQQNMDPSAMPRPTSQDLAGYWDMLQLSVEDVSMKFDELHQLKLNDWKIMESPERKEERKIPPPIPKKPPKGKFPITREKSLDLPDRQRQEARRRLMAAKRAASFRQNSATERADSIEIYIPEAQTRL</sequence>
<evidence type="ECO:0000250" key="1">
    <source>
        <dbReference type="UniProtKB" id="Q8BJ42"/>
    </source>
</evidence>
<evidence type="ECO:0000250" key="2">
    <source>
        <dbReference type="UniProtKB" id="Q9P1A6"/>
    </source>
</evidence>
<evidence type="ECO:0000256" key="3">
    <source>
        <dbReference type="SAM" id="MobiDB-lite"/>
    </source>
</evidence>
<evidence type="ECO:0000269" key="4">
    <source>
    </source>
</evidence>
<evidence type="ECO:0000269" key="5">
    <source>
    </source>
</evidence>
<evidence type="ECO:0000305" key="6"/>
<evidence type="ECO:0000312" key="7">
    <source>
        <dbReference type="RGD" id="620224"/>
    </source>
</evidence>
<evidence type="ECO:0007744" key="8">
    <source>
    </source>
</evidence>
<comment type="function">
    <text>May play a role in the molecular organization of synapses and neuronal cell signaling. Could be an adapter protein linking ion channel to the subsynaptic cytoskeleton. May induce enrichment of PSD-95/SAP90 at the plasma membrane.</text>
</comment>
<comment type="subunit">
    <text evidence="5">Interacts with DLG4/PSD-95.</text>
</comment>
<comment type="interaction">
    <interactant intactId="EBI-81025">
        <id>P97837</id>
    </interactant>
    <interactant intactId="EBI-375655">
        <id>P31016</id>
        <label>Dlg4</label>
    </interactant>
    <organismsDiffer>false</organismsDiffer>
    <experiments>2</experiments>
</comment>
<comment type="subcellular location">
    <subcellularLocation>
        <location evidence="5">Cell membrane</location>
        <topology evidence="5">Peripheral membrane protein</topology>
    </subcellularLocation>
    <subcellularLocation>
        <location evidence="5">Postsynaptic density</location>
    </subcellularLocation>
    <subcellularLocation>
        <location evidence="5">Synapse</location>
    </subcellularLocation>
    <text>Postsynaptic density of neuronal cells.</text>
</comment>
<comment type="tissue specificity">
    <text evidence="4 5">Expressed in various brain areas.</text>
</comment>
<comment type="similarity">
    <text evidence="6">Belongs to the SAPAP family.</text>
</comment>
<comment type="sequence caution" evidence="6">
    <conflict type="erroneous initiation">
        <sequence resource="EMBL-CDS" id="AAB48588"/>
    </conflict>
</comment>
<dbReference type="EMBL" id="U67138">
    <property type="protein sequence ID" value="AAB48588.1"/>
    <property type="status" value="ALT_INIT"/>
    <property type="molecule type" value="mRNA"/>
</dbReference>
<dbReference type="RefSeq" id="NP_446353.2">
    <property type="nucleotide sequence ID" value="NM_053901.1"/>
</dbReference>
<dbReference type="SMR" id="P97837"/>
<dbReference type="BioGRID" id="250564">
    <property type="interactions" value="6"/>
</dbReference>
<dbReference type="FunCoup" id="P97837">
    <property type="interactions" value="1266"/>
</dbReference>
<dbReference type="IntAct" id="P97837">
    <property type="interactions" value="8"/>
</dbReference>
<dbReference type="MINT" id="P97837"/>
<dbReference type="STRING" id="10116.ENSRNOP00000054654"/>
<dbReference type="iPTMnet" id="P97837"/>
<dbReference type="PhosphoSitePlus" id="P97837"/>
<dbReference type="SwissPalm" id="P97837"/>
<dbReference type="PaxDb" id="10116-ENSRNOP00000054654"/>
<dbReference type="ABCD" id="P97837">
    <property type="antibodies" value="10 sequenced antibodies"/>
</dbReference>
<dbReference type="GeneID" id="116681"/>
<dbReference type="KEGG" id="rno:116681"/>
<dbReference type="UCSC" id="RGD:620224">
    <property type="organism name" value="rat"/>
</dbReference>
<dbReference type="AGR" id="RGD:620224"/>
<dbReference type="CTD" id="9228"/>
<dbReference type="RGD" id="620224">
    <property type="gene designation" value="Dlgap2"/>
</dbReference>
<dbReference type="eggNOG" id="KOG3971">
    <property type="taxonomic scope" value="Eukaryota"/>
</dbReference>
<dbReference type="InParanoid" id="P97837"/>
<dbReference type="PhylomeDB" id="P97837"/>
<dbReference type="Reactome" id="R-RNO-6794361">
    <property type="pathway name" value="Neurexins and neuroligins"/>
</dbReference>
<dbReference type="PRO" id="PR:P97837"/>
<dbReference type="Proteomes" id="UP000002494">
    <property type="component" value="Unplaced"/>
</dbReference>
<dbReference type="GO" id="GO:0030425">
    <property type="term" value="C:dendrite"/>
    <property type="evidence" value="ECO:0000314"/>
    <property type="project" value="RGD"/>
</dbReference>
<dbReference type="GO" id="GO:0043197">
    <property type="term" value="C:dendritic spine"/>
    <property type="evidence" value="ECO:0000314"/>
    <property type="project" value="RGD"/>
</dbReference>
<dbReference type="GO" id="GO:0098978">
    <property type="term" value="C:glutamatergic synapse"/>
    <property type="evidence" value="ECO:0000266"/>
    <property type="project" value="RGD"/>
</dbReference>
<dbReference type="GO" id="GO:0005883">
    <property type="term" value="C:neurofilament"/>
    <property type="evidence" value="ECO:0000303"/>
    <property type="project" value="UniProtKB"/>
</dbReference>
<dbReference type="GO" id="GO:0099092">
    <property type="term" value="C:postsynaptic density, intracellular component"/>
    <property type="evidence" value="ECO:0000266"/>
    <property type="project" value="RGD"/>
</dbReference>
<dbReference type="GO" id="GO:0045211">
    <property type="term" value="C:postsynaptic membrane"/>
    <property type="evidence" value="ECO:0000303"/>
    <property type="project" value="RGD"/>
</dbReference>
<dbReference type="GO" id="GO:0099572">
    <property type="term" value="C:postsynaptic specialization"/>
    <property type="evidence" value="ECO:0000318"/>
    <property type="project" value="GO_Central"/>
</dbReference>
<dbReference type="GO" id="GO:0004385">
    <property type="term" value="F:guanylate kinase activity"/>
    <property type="evidence" value="ECO:0000303"/>
    <property type="project" value="RGD"/>
</dbReference>
<dbReference type="GO" id="GO:0060090">
    <property type="term" value="F:molecular adaptor activity"/>
    <property type="evidence" value="ECO:0000318"/>
    <property type="project" value="GO_Central"/>
</dbReference>
<dbReference type="GO" id="GO:0019904">
    <property type="term" value="F:protein domain specific binding"/>
    <property type="evidence" value="ECO:0000314"/>
    <property type="project" value="RGD"/>
</dbReference>
<dbReference type="GO" id="GO:0050804">
    <property type="term" value="P:modulation of chemical synaptic transmission"/>
    <property type="evidence" value="ECO:0000266"/>
    <property type="project" value="RGD"/>
</dbReference>
<dbReference type="GO" id="GO:0007270">
    <property type="term" value="P:neuron-neuron synaptic transmission"/>
    <property type="evidence" value="ECO:0000303"/>
    <property type="project" value="UniProtKB"/>
</dbReference>
<dbReference type="InterPro" id="IPR005026">
    <property type="entry name" value="SAPAP"/>
</dbReference>
<dbReference type="PANTHER" id="PTHR12353:SF3">
    <property type="entry name" value="DISKS LARGE-ASSOCIATED PROTEIN 2"/>
    <property type="match status" value="1"/>
</dbReference>
<dbReference type="PANTHER" id="PTHR12353">
    <property type="entry name" value="DISKS LARGE-ASSOCIATED PROTEIN DAP SAP90/PSD-95-ASSOCIATED PROTEIN"/>
    <property type="match status" value="1"/>
</dbReference>
<dbReference type="Pfam" id="PF03359">
    <property type="entry name" value="GKAP"/>
    <property type="match status" value="1"/>
</dbReference>